<keyword id="KW-0175">Coiled coil</keyword>
<keyword id="KW-0963">Cytoplasm</keyword>
<keyword id="KW-0479">Metal-binding</keyword>
<keyword id="KW-1185">Reference proteome</keyword>
<keyword id="KW-0862">Zinc</keyword>
<keyword id="KW-0863">Zinc-finger</keyword>
<reference key="1">
    <citation type="journal article" date="2002" name="Proc. Natl. Acad. Sci. U.S.A.">
        <title>Extensive mosaic structure revealed by the complete genome sequence of uropathogenic Escherichia coli.</title>
        <authorList>
            <person name="Welch R.A."/>
            <person name="Burland V."/>
            <person name="Plunkett G. III"/>
            <person name="Redford P."/>
            <person name="Roesch P."/>
            <person name="Rasko D."/>
            <person name="Buckles E.L."/>
            <person name="Liou S.-R."/>
            <person name="Boutin A."/>
            <person name="Hackett J."/>
            <person name="Stroud D."/>
            <person name="Mayhew G.F."/>
            <person name="Rose D.J."/>
            <person name="Zhou S."/>
            <person name="Schwartz D.C."/>
            <person name="Perna N.T."/>
            <person name="Mobley H.L.T."/>
            <person name="Donnenberg M.S."/>
            <person name="Blattner F.R."/>
        </authorList>
    </citation>
    <scope>NUCLEOTIDE SEQUENCE [LARGE SCALE GENOMIC DNA]</scope>
    <source>
        <strain>CFT073 / ATCC 700928 / UPEC</strain>
    </source>
</reference>
<name>DKSA_ECOL6</name>
<feature type="chain" id="PRO_0000187538" description="RNA polymerase-binding transcription factor DksA">
    <location>
        <begin position="1"/>
        <end position="151"/>
    </location>
</feature>
<feature type="zinc finger region" description="dksA C4-type" evidence="1">
    <location>
        <begin position="114"/>
        <end position="138"/>
    </location>
</feature>
<feature type="coiled-coil region" evidence="1">
    <location>
        <begin position="33"/>
        <end position="54"/>
    </location>
</feature>
<feature type="binding site" evidence="1">
    <location>
        <position position="114"/>
    </location>
    <ligand>
        <name>Zn(2+)</name>
        <dbReference type="ChEBI" id="CHEBI:29105"/>
    </ligand>
</feature>
<feature type="binding site" evidence="1">
    <location>
        <position position="117"/>
    </location>
    <ligand>
        <name>Zn(2+)</name>
        <dbReference type="ChEBI" id="CHEBI:29105"/>
    </ligand>
</feature>
<feature type="binding site" evidence="1">
    <location>
        <position position="135"/>
    </location>
    <ligand>
        <name>Zn(2+)</name>
        <dbReference type="ChEBI" id="CHEBI:29105"/>
    </ligand>
</feature>
<feature type="binding site" evidence="1">
    <location>
        <position position="138"/>
    </location>
    <ligand>
        <name>Zn(2+)</name>
        <dbReference type="ChEBI" id="CHEBI:29105"/>
    </ligand>
</feature>
<evidence type="ECO:0000255" key="1">
    <source>
        <dbReference type="HAMAP-Rule" id="MF_00926"/>
    </source>
</evidence>
<evidence type="ECO:0000305" key="2"/>
<protein>
    <recommendedName>
        <fullName evidence="1">RNA polymerase-binding transcription factor DksA</fullName>
    </recommendedName>
</protein>
<organism>
    <name type="scientific">Escherichia coli O6:H1 (strain CFT073 / ATCC 700928 / UPEC)</name>
    <dbReference type="NCBI Taxonomy" id="199310"/>
    <lineage>
        <taxon>Bacteria</taxon>
        <taxon>Pseudomonadati</taxon>
        <taxon>Pseudomonadota</taxon>
        <taxon>Gammaproteobacteria</taxon>
        <taxon>Enterobacterales</taxon>
        <taxon>Enterobacteriaceae</taxon>
        <taxon>Escherichia</taxon>
    </lineage>
</organism>
<dbReference type="EMBL" id="AE014075">
    <property type="protein sequence ID" value="AAN78672.1"/>
    <property type="status" value="ALT_INIT"/>
    <property type="molecule type" value="Genomic_DNA"/>
</dbReference>
<dbReference type="RefSeq" id="WP_001155227.1">
    <property type="nucleotide sequence ID" value="NZ_CP051263.1"/>
</dbReference>
<dbReference type="SMR" id="P0ABS2"/>
<dbReference type="STRING" id="199310.c0178"/>
<dbReference type="GeneID" id="93777282"/>
<dbReference type="KEGG" id="ecc:c0178"/>
<dbReference type="eggNOG" id="COG1734">
    <property type="taxonomic scope" value="Bacteria"/>
</dbReference>
<dbReference type="HOGENOM" id="CLU_043144_2_0_6"/>
<dbReference type="Proteomes" id="UP000001410">
    <property type="component" value="Chromosome"/>
</dbReference>
<dbReference type="GO" id="GO:0005737">
    <property type="term" value="C:cytoplasm"/>
    <property type="evidence" value="ECO:0007669"/>
    <property type="project" value="UniProtKB-SubCell"/>
</dbReference>
<dbReference type="GO" id="GO:0008270">
    <property type="term" value="F:zinc ion binding"/>
    <property type="evidence" value="ECO:0007669"/>
    <property type="project" value="UniProtKB-UniRule"/>
</dbReference>
<dbReference type="GO" id="GO:0010468">
    <property type="term" value="P:regulation of gene expression"/>
    <property type="evidence" value="ECO:0007669"/>
    <property type="project" value="UniProtKB-UniRule"/>
</dbReference>
<dbReference type="FunFam" id="1.20.120.910:FF:000001">
    <property type="entry name" value="RNA polymerase-binding transcription factor DksA"/>
    <property type="match status" value="1"/>
</dbReference>
<dbReference type="Gene3D" id="1.20.120.910">
    <property type="entry name" value="DksA, coiled-coil domain"/>
    <property type="match status" value="1"/>
</dbReference>
<dbReference type="HAMAP" id="MF_00926">
    <property type="entry name" value="DksA"/>
    <property type="match status" value="1"/>
</dbReference>
<dbReference type="InterPro" id="IPR048489">
    <property type="entry name" value="DksA_N"/>
</dbReference>
<dbReference type="InterPro" id="IPR012784">
    <property type="entry name" value="DksA_RNA_pol-bd"/>
</dbReference>
<dbReference type="InterPro" id="IPR037187">
    <property type="entry name" value="DnaK_N"/>
</dbReference>
<dbReference type="InterPro" id="IPR020460">
    <property type="entry name" value="Znf_C4-type_bac"/>
</dbReference>
<dbReference type="InterPro" id="IPR000962">
    <property type="entry name" value="Znf_DskA_TraR"/>
</dbReference>
<dbReference type="InterPro" id="IPR020458">
    <property type="entry name" value="Znf_DskA_TraR_CS"/>
</dbReference>
<dbReference type="NCBIfam" id="TIGR02420">
    <property type="entry name" value="dksA"/>
    <property type="match status" value="1"/>
</dbReference>
<dbReference type="NCBIfam" id="NF008045">
    <property type="entry name" value="PRK10778.1"/>
    <property type="match status" value="1"/>
</dbReference>
<dbReference type="PANTHER" id="PTHR33823:SF2">
    <property type="entry name" value="RNA POLYMERASE-BINDING TRANSCRIPTION FACTOR DKSA"/>
    <property type="match status" value="1"/>
</dbReference>
<dbReference type="PANTHER" id="PTHR33823">
    <property type="entry name" value="RNA POLYMERASE-BINDING TRANSCRIPTION FACTOR DKSA-RELATED"/>
    <property type="match status" value="1"/>
</dbReference>
<dbReference type="Pfam" id="PF21157">
    <property type="entry name" value="DksA_N"/>
    <property type="match status" value="1"/>
</dbReference>
<dbReference type="Pfam" id="PF01258">
    <property type="entry name" value="zf-dskA_traR"/>
    <property type="match status" value="1"/>
</dbReference>
<dbReference type="PRINTS" id="PR00618">
    <property type="entry name" value="DKSAZNFINGER"/>
</dbReference>
<dbReference type="SUPFAM" id="SSF109635">
    <property type="entry name" value="DnaK suppressor protein DksA, alpha-hairpin domain"/>
    <property type="match status" value="1"/>
</dbReference>
<dbReference type="SUPFAM" id="SSF57716">
    <property type="entry name" value="Glucocorticoid receptor-like (DNA-binding domain)"/>
    <property type="match status" value="1"/>
</dbReference>
<dbReference type="PROSITE" id="PS01102">
    <property type="entry name" value="ZF_DKSA_1"/>
    <property type="match status" value="1"/>
</dbReference>
<dbReference type="PROSITE" id="PS51128">
    <property type="entry name" value="ZF_DKSA_2"/>
    <property type="match status" value="1"/>
</dbReference>
<comment type="function">
    <text evidence="1">Transcription factor that acts by binding directly to the RNA polymerase (RNAP). Required for negative regulation of rRNA expression and positive regulation of several amino acid biosynthesis promoters. Also required for regulation of fis expression.</text>
</comment>
<comment type="subunit">
    <text evidence="1">Interacts directly with the RNA polymerase.</text>
</comment>
<comment type="subcellular location">
    <subcellularLocation>
        <location evidence="1">Cytoplasm</location>
    </subcellularLocation>
</comment>
<comment type="similarity">
    <text evidence="1">Belongs to the DksA family.</text>
</comment>
<comment type="sequence caution" evidence="2">
    <conflict type="erroneous initiation">
        <sequence resource="EMBL-CDS" id="AAN78672"/>
    </conflict>
    <text>Extended N-terminus.</text>
</comment>
<proteinExistence type="inferred from homology"/>
<accession>P0ABS2</accession>
<accession>P18274</accession>
<sequence>MQEGQNRKTSSLSILAIAGVEPYQEKPGEEYMNEAQLAHFRRILEAWRNQLRDEVDRTVTHMQDEAANFPDPVDRAAQEEEFSLELRNRDRERKLIKKIEKTLKKVEDEDFGYCESCGVEIGIRRLEARPTADLCIDCKTLAEIREKQMAG</sequence>
<gene>
    <name evidence="1" type="primary">dksA</name>
    <name type="ordered locus">c0178</name>
</gene>